<keyword id="KW-0687">Ribonucleoprotein</keyword>
<keyword id="KW-0689">Ribosomal protein</keyword>
<keyword id="KW-0694">RNA-binding</keyword>
<keyword id="KW-0699">rRNA-binding</keyword>
<keyword id="KW-0820">tRNA-binding</keyword>
<gene>
    <name evidence="1" type="primary">rpsM</name>
    <name type="ordered locus">LCABL_26470</name>
</gene>
<proteinExistence type="inferred from homology"/>
<sequence length="121" mass="13491">MARIAGVDLPRGKQIVIALTYIYGVGKTTAQKVLKNAGVPENVRQDDLTPEQEDKIRAALDSVKVEGDLRREVNLNIKRLMEIGSYRGIRHRRGLPVRGQNTKNNARTRKGKKASMAGKKK</sequence>
<reference key="1">
    <citation type="submission" date="2008-06" db="EMBL/GenBank/DDBJ databases">
        <title>Lactobacillus casei BL23 complete genome sequence.</title>
        <authorList>
            <person name="Maze A."/>
            <person name="Boel G."/>
            <person name="Bourand A."/>
            <person name="Loux V."/>
            <person name="Gibrat J.F."/>
            <person name="Zuniga M."/>
            <person name="Hartke A."/>
            <person name="Deutscher J."/>
        </authorList>
    </citation>
    <scope>NUCLEOTIDE SEQUENCE [LARGE SCALE GENOMIC DNA]</scope>
    <source>
        <strain>BL23</strain>
    </source>
</reference>
<comment type="function">
    <text evidence="1">Located at the top of the head of the 30S subunit, it contacts several helices of the 16S rRNA. In the 70S ribosome it contacts the 23S rRNA (bridge B1a) and protein L5 of the 50S subunit (bridge B1b), connecting the 2 subunits; these bridges are implicated in subunit movement. Contacts the tRNAs in the A and P-sites.</text>
</comment>
<comment type="subunit">
    <text evidence="1">Part of the 30S ribosomal subunit. Forms a loose heterodimer with protein S19. Forms two bridges to the 50S subunit in the 70S ribosome.</text>
</comment>
<comment type="similarity">
    <text evidence="1">Belongs to the universal ribosomal protein uS13 family.</text>
</comment>
<evidence type="ECO:0000255" key="1">
    <source>
        <dbReference type="HAMAP-Rule" id="MF_01315"/>
    </source>
</evidence>
<evidence type="ECO:0000256" key="2">
    <source>
        <dbReference type="SAM" id="MobiDB-lite"/>
    </source>
</evidence>
<evidence type="ECO:0000305" key="3"/>
<organism>
    <name type="scientific">Lacticaseibacillus casei (strain BL23)</name>
    <name type="common">Lactobacillus casei</name>
    <dbReference type="NCBI Taxonomy" id="543734"/>
    <lineage>
        <taxon>Bacteria</taxon>
        <taxon>Bacillati</taxon>
        <taxon>Bacillota</taxon>
        <taxon>Bacilli</taxon>
        <taxon>Lactobacillales</taxon>
        <taxon>Lactobacillaceae</taxon>
        <taxon>Lacticaseibacillus</taxon>
    </lineage>
</organism>
<accession>B3WAJ4</accession>
<dbReference type="EMBL" id="FM177140">
    <property type="protein sequence ID" value="CAQ67713.1"/>
    <property type="molecule type" value="Genomic_DNA"/>
</dbReference>
<dbReference type="SMR" id="B3WAJ4"/>
<dbReference type="KEGG" id="lcb:LCABL_26470"/>
<dbReference type="HOGENOM" id="CLU_103849_1_1_9"/>
<dbReference type="GO" id="GO:0005829">
    <property type="term" value="C:cytosol"/>
    <property type="evidence" value="ECO:0007669"/>
    <property type="project" value="TreeGrafter"/>
</dbReference>
<dbReference type="GO" id="GO:0015935">
    <property type="term" value="C:small ribosomal subunit"/>
    <property type="evidence" value="ECO:0007669"/>
    <property type="project" value="TreeGrafter"/>
</dbReference>
<dbReference type="GO" id="GO:0019843">
    <property type="term" value="F:rRNA binding"/>
    <property type="evidence" value="ECO:0007669"/>
    <property type="project" value="UniProtKB-UniRule"/>
</dbReference>
<dbReference type="GO" id="GO:0003735">
    <property type="term" value="F:structural constituent of ribosome"/>
    <property type="evidence" value="ECO:0007669"/>
    <property type="project" value="InterPro"/>
</dbReference>
<dbReference type="GO" id="GO:0000049">
    <property type="term" value="F:tRNA binding"/>
    <property type="evidence" value="ECO:0007669"/>
    <property type="project" value="UniProtKB-UniRule"/>
</dbReference>
<dbReference type="GO" id="GO:0006412">
    <property type="term" value="P:translation"/>
    <property type="evidence" value="ECO:0007669"/>
    <property type="project" value="UniProtKB-UniRule"/>
</dbReference>
<dbReference type="FunFam" id="1.10.8.50:FF:000001">
    <property type="entry name" value="30S ribosomal protein S13"/>
    <property type="match status" value="1"/>
</dbReference>
<dbReference type="FunFam" id="4.10.910.10:FF:000001">
    <property type="entry name" value="30S ribosomal protein S13"/>
    <property type="match status" value="1"/>
</dbReference>
<dbReference type="Gene3D" id="1.10.8.50">
    <property type="match status" value="1"/>
</dbReference>
<dbReference type="Gene3D" id="4.10.910.10">
    <property type="entry name" value="30s ribosomal protein s13, domain 2"/>
    <property type="match status" value="1"/>
</dbReference>
<dbReference type="HAMAP" id="MF_01315">
    <property type="entry name" value="Ribosomal_uS13"/>
    <property type="match status" value="1"/>
</dbReference>
<dbReference type="InterPro" id="IPR027437">
    <property type="entry name" value="Rbsml_uS13_C"/>
</dbReference>
<dbReference type="InterPro" id="IPR001892">
    <property type="entry name" value="Ribosomal_uS13"/>
</dbReference>
<dbReference type="InterPro" id="IPR010979">
    <property type="entry name" value="Ribosomal_uS13-like_H2TH"/>
</dbReference>
<dbReference type="InterPro" id="IPR019980">
    <property type="entry name" value="Ribosomal_uS13_bac-type"/>
</dbReference>
<dbReference type="InterPro" id="IPR018269">
    <property type="entry name" value="Ribosomal_uS13_CS"/>
</dbReference>
<dbReference type="NCBIfam" id="TIGR03631">
    <property type="entry name" value="uS13_bact"/>
    <property type="match status" value="1"/>
</dbReference>
<dbReference type="PANTHER" id="PTHR10871">
    <property type="entry name" value="30S RIBOSOMAL PROTEIN S13/40S RIBOSOMAL PROTEIN S18"/>
    <property type="match status" value="1"/>
</dbReference>
<dbReference type="PANTHER" id="PTHR10871:SF1">
    <property type="entry name" value="SMALL RIBOSOMAL SUBUNIT PROTEIN US13M"/>
    <property type="match status" value="1"/>
</dbReference>
<dbReference type="Pfam" id="PF00416">
    <property type="entry name" value="Ribosomal_S13"/>
    <property type="match status" value="1"/>
</dbReference>
<dbReference type="PIRSF" id="PIRSF002134">
    <property type="entry name" value="Ribosomal_S13"/>
    <property type="match status" value="1"/>
</dbReference>
<dbReference type="SUPFAM" id="SSF46946">
    <property type="entry name" value="S13-like H2TH domain"/>
    <property type="match status" value="1"/>
</dbReference>
<dbReference type="PROSITE" id="PS00646">
    <property type="entry name" value="RIBOSOMAL_S13_1"/>
    <property type="match status" value="1"/>
</dbReference>
<dbReference type="PROSITE" id="PS50159">
    <property type="entry name" value="RIBOSOMAL_S13_2"/>
    <property type="match status" value="1"/>
</dbReference>
<protein>
    <recommendedName>
        <fullName evidence="1">Small ribosomal subunit protein uS13</fullName>
    </recommendedName>
    <alternativeName>
        <fullName evidence="3">30S ribosomal protein S13</fullName>
    </alternativeName>
</protein>
<name>RS13_LACCB</name>
<feature type="chain" id="PRO_1000141276" description="Small ribosomal subunit protein uS13">
    <location>
        <begin position="1"/>
        <end position="121"/>
    </location>
</feature>
<feature type="region of interest" description="Disordered" evidence="2">
    <location>
        <begin position="91"/>
        <end position="121"/>
    </location>
</feature>
<feature type="compositionally biased region" description="Basic residues" evidence="2">
    <location>
        <begin position="106"/>
        <end position="121"/>
    </location>
</feature>